<protein>
    <recommendedName>
        <fullName>Beta/kappa-theraphotoxin-Hlv1a</fullName>
        <shortName>Beta/kappa-TRTX-Hlv1a</shortName>
    </recommendedName>
    <alternativeName>
        <fullName evidence="3">Beta/kappa-theraphotoxin-Hl2a</fullName>
        <shortName evidence="3">Beta/kappa-TRTX-Hl2a</shortName>
    </alternativeName>
    <alternativeName>
        <fullName evidence="3">Haplotoxin-2</fullName>
    </alternativeName>
</protein>
<proteinExistence type="evidence at protein level"/>
<comment type="function">
    <text evidence="2">Spider venom neurotoxin that blocks voltage-gated sodium channel Nav1.3/SCN3A in human (IC(50)=80 nM) and rat (IC(50)=160 nM). Partially inhibits human Kv11.1/KCNH2/ERG (25% at 175 uM).</text>
</comment>
<comment type="subcellular location">
    <subcellularLocation>
        <location evidence="2">Secreted</location>
    </subcellularLocation>
</comment>
<comment type="tissue specificity">
    <text evidence="4">Expressed by the venom gland.</text>
</comment>
<comment type="domain">
    <text evidence="1">The presence of a 'disulfide through disulfide knot' structurally defines this protein as a knottin.</text>
</comment>
<comment type="mass spectrometry" mass="3705.6" method="MALDI" evidence="2"/>
<comment type="miscellaneous">
    <text>Negative results: has no effect on human and rat Nav1.8/SCN10A (Ref.1).</text>
</comment>
<comment type="similarity">
    <text evidence="4">Belongs to the neurotoxin 10 (Hwtx-1) family. 11 (haplotoxin-2) subfamily.</text>
</comment>
<keyword id="KW-0027">Amidation</keyword>
<keyword id="KW-0903">Direct protein sequencing</keyword>
<keyword id="KW-1015">Disulfide bond</keyword>
<keyword id="KW-0872">Ion channel impairing toxin</keyword>
<keyword id="KW-0960">Knottin</keyword>
<keyword id="KW-0528">Neurotoxin</keyword>
<keyword id="KW-0632">Potassium channel impairing toxin</keyword>
<keyword id="KW-0964">Secreted</keyword>
<keyword id="KW-0800">Toxin</keyword>
<keyword id="KW-1220">Voltage-gated potassium channel impairing toxin</keyword>
<keyword id="KW-0738">Voltage-gated sodium channel impairing toxin</keyword>
<feature type="chain" id="PRO_0000419140" description="Beta/kappa-theraphotoxin-Hlv1a">
    <location>
        <begin position="1"/>
        <end position="33"/>
    </location>
</feature>
<feature type="modified residue" description="Isoleucine amide" evidence="2">
    <location>
        <position position="33"/>
    </location>
</feature>
<feature type="disulfide bond" evidence="1">
    <location>
        <begin position="2"/>
        <end position="17"/>
    </location>
</feature>
<feature type="disulfide bond" evidence="1">
    <location>
        <begin position="9"/>
        <end position="22"/>
    </location>
</feature>
<feature type="disulfide bond" evidence="1">
    <location>
        <begin position="16"/>
        <end position="29"/>
    </location>
</feature>
<name>HTX2_CYRLI</name>
<dbReference type="SMR" id="B3EWN3"/>
<dbReference type="ArachnoServer" id="AS001561">
    <property type="toxin name" value="beta/kappa-theraphotoxin-Hlv1a"/>
</dbReference>
<dbReference type="GO" id="GO:0005576">
    <property type="term" value="C:extracellular region"/>
    <property type="evidence" value="ECO:0007669"/>
    <property type="project" value="UniProtKB-SubCell"/>
</dbReference>
<dbReference type="GO" id="GO:0008200">
    <property type="term" value="F:ion channel inhibitor activity"/>
    <property type="evidence" value="ECO:0007669"/>
    <property type="project" value="InterPro"/>
</dbReference>
<dbReference type="GO" id="GO:0015459">
    <property type="term" value="F:potassium channel regulator activity"/>
    <property type="evidence" value="ECO:0007669"/>
    <property type="project" value="UniProtKB-KW"/>
</dbReference>
<dbReference type="GO" id="GO:0017080">
    <property type="term" value="F:sodium channel regulator activity"/>
    <property type="evidence" value="ECO:0007669"/>
    <property type="project" value="UniProtKB-KW"/>
</dbReference>
<dbReference type="GO" id="GO:0090729">
    <property type="term" value="F:toxin activity"/>
    <property type="evidence" value="ECO:0007669"/>
    <property type="project" value="UniProtKB-KW"/>
</dbReference>
<dbReference type="InterPro" id="IPR011696">
    <property type="entry name" value="Huwentoxin-1"/>
</dbReference>
<dbReference type="InterPro" id="IPR013140">
    <property type="entry name" value="Huwentoxin_CS1"/>
</dbReference>
<dbReference type="Pfam" id="PF07740">
    <property type="entry name" value="Toxin_12"/>
    <property type="match status" value="1"/>
</dbReference>
<dbReference type="SUPFAM" id="SSF57059">
    <property type="entry name" value="omega toxin-like"/>
    <property type="match status" value="1"/>
</dbReference>
<dbReference type="PROSITE" id="PS60021">
    <property type="entry name" value="HWTX_1"/>
    <property type="match status" value="1"/>
</dbReference>
<sequence length="33" mass="3715">ACKGLFVTCTPGKDECCPNHVCSSKHKWCKYKI</sequence>
<organism>
    <name type="scientific">Cyriopagopus lividus</name>
    <name type="common">Cobalt blue tarantula</name>
    <name type="synonym">Haplopelma lividum</name>
    <dbReference type="NCBI Taxonomy" id="2053133"/>
    <lineage>
        <taxon>Eukaryota</taxon>
        <taxon>Metazoa</taxon>
        <taxon>Ecdysozoa</taxon>
        <taxon>Arthropoda</taxon>
        <taxon>Chelicerata</taxon>
        <taxon>Arachnida</taxon>
        <taxon>Araneae</taxon>
        <taxon>Mygalomorphae</taxon>
        <taxon>Theraphosidae</taxon>
        <taxon>Cyriopagopus</taxon>
    </lineage>
</organism>
<accession>B3EWN3</accession>
<reference key="1">
    <citation type="submission" date="2012-05" db="UniProtKB">
        <title>Novel peptides isolated from spider venom, and uses thereof.</title>
        <authorList>
            <person name="Meir A."/>
            <person name="Cherki R.S."/>
            <person name="Kolb E."/>
            <person name="Langut Y."/>
            <person name="Bajayo N."/>
        </authorList>
    </citation>
    <scope>PROTEIN SEQUENCE</scope>
    <scope>FUNCTION</scope>
    <scope>MASS SPECTROMETRY</scope>
    <scope>AMIDATION AT ILE-33</scope>
    <source>
        <tissue>Venom</tissue>
    </source>
</reference>
<evidence type="ECO:0000250" key="1">
    <source>
        <dbReference type="UniProtKB" id="D2Y1X6"/>
    </source>
</evidence>
<evidence type="ECO:0000269" key="2">
    <source ref="1"/>
</evidence>
<evidence type="ECO:0000303" key="3">
    <source ref="1"/>
</evidence>
<evidence type="ECO:0000305" key="4"/>